<reference key="1">
    <citation type="submission" date="2006-12" db="EMBL/GenBank/DDBJ databases">
        <authorList>
            <person name="Fouts D.E."/>
            <person name="Nelson K.E."/>
            <person name="Sebastian Y."/>
        </authorList>
    </citation>
    <scope>NUCLEOTIDE SEQUENCE [LARGE SCALE GENOMIC DNA]</scope>
    <source>
        <strain>81-176</strain>
    </source>
</reference>
<comment type="function">
    <text evidence="1">Peptide chain release factor 2 directs the termination of translation in response to the peptide chain termination codons UGA and UAA.</text>
</comment>
<comment type="subcellular location">
    <subcellularLocation>
        <location evidence="1">Cytoplasm</location>
    </subcellularLocation>
</comment>
<comment type="PTM">
    <text evidence="1">Methylated by PrmC. Methylation increases the termination efficiency of RF2.</text>
</comment>
<comment type="similarity">
    <text evidence="1">Belongs to the prokaryotic/mitochondrial release factor family.</text>
</comment>
<evidence type="ECO:0000255" key="1">
    <source>
        <dbReference type="HAMAP-Rule" id="MF_00094"/>
    </source>
</evidence>
<organism>
    <name type="scientific">Campylobacter jejuni subsp. jejuni serotype O:23/36 (strain 81-176)</name>
    <dbReference type="NCBI Taxonomy" id="354242"/>
    <lineage>
        <taxon>Bacteria</taxon>
        <taxon>Pseudomonadati</taxon>
        <taxon>Campylobacterota</taxon>
        <taxon>Epsilonproteobacteria</taxon>
        <taxon>Campylobacterales</taxon>
        <taxon>Campylobacteraceae</taxon>
        <taxon>Campylobacter</taxon>
    </lineage>
</organism>
<proteinExistence type="inferred from homology"/>
<feature type="chain" id="PRO_1000004981" description="Peptide chain release factor 2">
    <location>
        <begin position="1"/>
        <end position="365"/>
    </location>
</feature>
<feature type="modified residue" description="N5-methylglutamine" evidence="1">
    <location>
        <position position="251"/>
    </location>
</feature>
<protein>
    <recommendedName>
        <fullName evidence="1">Peptide chain release factor 2</fullName>
        <shortName evidence="1">RF-2</shortName>
    </recommendedName>
</protein>
<keyword id="KW-0963">Cytoplasm</keyword>
<keyword id="KW-0488">Methylation</keyword>
<keyword id="KW-0648">Protein biosynthesis</keyword>
<dbReference type="EMBL" id="CP000538">
    <property type="protein sequence ID" value="EAQ72778.1"/>
    <property type="molecule type" value="Genomic_DNA"/>
</dbReference>
<dbReference type="RefSeq" id="WP_002869186.1">
    <property type="nucleotide sequence ID" value="NC_008787.1"/>
</dbReference>
<dbReference type="SMR" id="A1W163"/>
<dbReference type="KEGG" id="cjj:CJJ81176_1448"/>
<dbReference type="eggNOG" id="COG1186">
    <property type="taxonomic scope" value="Bacteria"/>
</dbReference>
<dbReference type="HOGENOM" id="CLU_036856_6_0_7"/>
<dbReference type="Proteomes" id="UP000000646">
    <property type="component" value="Chromosome"/>
</dbReference>
<dbReference type="GO" id="GO:0005737">
    <property type="term" value="C:cytoplasm"/>
    <property type="evidence" value="ECO:0007669"/>
    <property type="project" value="UniProtKB-SubCell"/>
</dbReference>
<dbReference type="GO" id="GO:0016149">
    <property type="term" value="F:translation release factor activity, codon specific"/>
    <property type="evidence" value="ECO:0007669"/>
    <property type="project" value="UniProtKB-UniRule"/>
</dbReference>
<dbReference type="FunFam" id="3.30.160.20:FF:000010">
    <property type="entry name" value="Peptide chain release factor 2"/>
    <property type="match status" value="1"/>
</dbReference>
<dbReference type="Gene3D" id="3.30.160.20">
    <property type="match status" value="1"/>
</dbReference>
<dbReference type="Gene3D" id="3.30.70.1660">
    <property type="match status" value="1"/>
</dbReference>
<dbReference type="Gene3D" id="1.20.58.410">
    <property type="entry name" value="Release factor"/>
    <property type="match status" value="1"/>
</dbReference>
<dbReference type="HAMAP" id="MF_00094">
    <property type="entry name" value="Rel_fac_2"/>
    <property type="match status" value="1"/>
</dbReference>
<dbReference type="InterPro" id="IPR005139">
    <property type="entry name" value="PCRF"/>
</dbReference>
<dbReference type="InterPro" id="IPR000352">
    <property type="entry name" value="Pep_chain_release_fac_I"/>
</dbReference>
<dbReference type="InterPro" id="IPR045853">
    <property type="entry name" value="Pep_chain_release_fac_I_sf"/>
</dbReference>
<dbReference type="InterPro" id="IPR004374">
    <property type="entry name" value="PrfB"/>
</dbReference>
<dbReference type="NCBIfam" id="TIGR00020">
    <property type="entry name" value="prfB"/>
    <property type="match status" value="1"/>
</dbReference>
<dbReference type="PANTHER" id="PTHR43116:SF3">
    <property type="entry name" value="CLASS I PEPTIDE CHAIN RELEASE FACTOR"/>
    <property type="match status" value="1"/>
</dbReference>
<dbReference type="PANTHER" id="PTHR43116">
    <property type="entry name" value="PEPTIDE CHAIN RELEASE FACTOR 2"/>
    <property type="match status" value="1"/>
</dbReference>
<dbReference type="Pfam" id="PF03462">
    <property type="entry name" value="PCRF"/>
    <property type="match status" value="1"/>
</dbReference>
<dbReference type="Pfam" id="PF00472">
    <property type="entry name" value="RF-1"/>
    <property type="match status" value="1"/>
</dbReference>
<dbReference type="SMART" id="SM00937">
    <property type="entry name" value="PCRF"/>
    <property type="match status" value="1"/>
</dbReference>
<dbReference type="SUPFAM" id="SSF75620">
    <property type="entry name" value="Release factor"/>
    <property type="match status" value="1"/>
</dbReference>
<dbReference type="PROSITE" id="PS00745">
    <property type="entry name" value="RF_PROK_I"/>
    <property type="match status" value="1"/>
</dbReference>
<sequence>MDNYEFSELLKTLKNKVGNIASIIKPENIQTRLKEIEELENSPSFWSDVKQAGIIGKEKTKITNLLKNYENAFNALNDANELFDLANSENDTETLEALFNDASKLEDTITSLEISMLLSGENDGKNAIVSIHPGAGGTESNDWASILYRMYLRFCEREGFKVETLDFQEGEEAGLKDVSFLVKGENAYGYLKAENGIHRLVRTSPFDSAGRRHTSFSSVMVSPELDDDIEIEIEEKDIRIDYYRASGAGGQHVNKTESAVRITHFPTGIVVQCQNDRSQHKNKATAFKMLKSRLYELELMKQQDSANTGEKSEIGWGHQIRSYVLFPYQQVKDNRSGEAFSQVDNILDGDIKKMIEGVLIALKAE</sequence>
<gene>
    <name evidence="1" type="primary">prfB</name>
    <name type="ordered locus">CJJ81176_1448</name>
</gene>
<name>RF2_CAMJJ</name>
<accession>A1W163</accession>